<gene>
    <name evidence="1" type="primary">aroA</name>
    <name type="ordered locus">VCM66_1672</name>
</gene>
<feature type="chain" id="PRO_1000124715" description="3-phosphoshikimate 1-carboxyvinyltransferase">
    <location>
        <begin position="1"/>
        <end position="426"/>
    </location>
</feature>
<feature type="active site" description="Proton acceptor" evidence="1">
    <location>
        <position position="314"/>
    </location>
</feature>
<feature type="binding site" evidence="1">
    <location>
        <position position="22"/>
    </location>
    <ligand>
        <name>3-phosphoshikimate</name>
        <dbReference type="ChEBI" id="CHEBI:145989"/>
    </ligand>
</feature>
<feature type="binding site" evidence="1">
    <location>
        <position position="22"/>
    </location>
    <ligand>
        <name>phosphoenolpyruvate</name>
        <dbReference type="ChEBI" id="CHEBI:58702"/>
    </ligand>
</feature>
<feature type="binding site" evidence="1">
    <location>
        <position position="23"/>
    </location>
    <ligand>
        <name>3-phosphoshikimate</name>
        <dbReference type="ChEBI" id="CHEBI:145989"/>
    </ligand>
</feature>
<feature type="binding site" evidence="1">
    <location>
        <position position="27"/>
    </location>
    <ligand>
        <name>3-phosphoshikimate</name>
        <dbReference type="ChEBI" id="CHEBI:145989"/>
    </ligand>
</feature>
<feature type="binding site" evidence="1">
    <location>
        <position position="96"/>
    </location>
    <ligand>
        <name>phosphoenolpyruvate</name>
        <dbReference type="ChEBI" id="CHEBI:58702"/>
    </ligand>
</feature>
<feature type="binding site" evidence="1">
    <location>
        <position position="124"/>
    </location>
    <ligand>
        <name>phosphoenolpyruvate</name>
        <dbReference type="ChEBI" id="CHEBI:58702"/>
    </ligand>
</feature>
<feature type="binding site" evidence="1">
    <location>
        <position position="170"/>
    </location>
    <ligand>
        <name>3-phosphoshikimate</name>
        <dbReference type="ChEBI" id="CHEBI:145989"/>
    </ligand>
</feature>
<feature type="binding site" evidence="1">
    <location>
        <position position="171"/>
    </location>
    <ligand>
        <name>3-phosphoshikimate</name>
        <dbReference type="ChEBI" id="CHEBI:145989"/>
    </ligand>
</feature>
<feature type="binding site" evidence="1">
    <location>
        <position position="172"/>
    </location>
    <ligand>
        <name>3-phosphoshikimate</name>
        <dbReference type="ChEBI" id="CHEBI:145989"/>
    </ligand>
</feature>
<feature type="binding site" evidence="1">
    <location>
        <position position="172"/>
    </location>
    <ligand>
        <name>phosphoenolpyruvate</name>
        <dbReference type="ChEBI" id="CHEBI:58702"/>
    </ligand>
</feature>
<feature type="binding site" evidence="1">
    <location>
        <position position="198"/>
    </location>
    <ligand>
        <name>3-phosphoshikimate</name>
        <dbReference type="ChEBI" id="CHEBI:145989"/>
    </ligand>
</feature>
<feature type="binding site" evidence="1">
    <location>
        <position position="314"/>
    </location>
    <ligand>
        <name>3-phosphoshikimate</name>
        <dbReference type="ChEBI" id="CHEBI:145989"/>
    </ligand>
</feature>
<feature type="binding site" evidence="1">
    <location>
        <position position="337"/>
    </location>
    <ligand>
        <name>3-phosphoshikimate</name>
        <dbReference type="ChEBI" id="CHEBI:145989"/>
    </ligand>
</feature>
<feature type="binding site" evidence="1">
    <location>
        <position position="341"/>
    </location>
    <ligand>
        <name>3-phosphoshikimate</name>
        <dbReference type="ChEBI" id="CHEBI:145989"/>
    </ligand>
</feature>
<feature type="binding site" evidence="1">
    <location>
        <position position="345"/>
    </location>
    <ligand>
        <name>phosphoenolpyruvate</name>
        <dbReference type="ChEBI" id="CHEBI:58702"/>
    </ligand>
</feature>
<feature type="binding site" evidence="1">
    <location>
        <position position="387"/>
    </location>
    <ligand>
        <name>phosphoenolpyruvate</name>
        <dbReference type="ChEBI" id="CHEBI:58702"/>
    </ligand>
</feature>
<feature type="binding site" evidence="1">
    <location>
        <position position="412"/>
    </location>
    <ligand>
        <name>phosphoenolpyruvate</name>
        <dbReference type="ChEBI" id="CHEBI:58702"/>
    </ligand>
</feature>
<protein>
    <recommendedName>
        <fullName evidence="1">3-phosphoshikimate 1-carboxyvinyltransferase</fullName>
        <ecNumber evidence="1">2.5.1.19</ecNumber>
    </recommendedName>
    <alternativeName>
        <fullName evidence="1">5-enolpyruvylshikimate-3-phosphate synthase</fullName>
        <shortName evidence="1">EPSP synthase</shortName>
        <shortName evidence="1">EPSPS</shortName>
    </alternativeName>
</protein>
<accession>C3LN54</accession>
<sequence>MESLTLQPIELISGEVNLPGSKSVSNRALLLAALASGTTRLTNLLDSDDIRHMLNALTKLGVNYRLSADKTTCEVEGLGQAFHTTQPLELFLGNAGTAMRPLAAALCLGQGDYVLTGEPRMKERPIGHLVDALRQAGAQIEYLEQENFPPLRIQGTGLQAGTVTIDGSISSQFLTAFLMSAPLAQGKVTIKIVGELVSKPYIDITLHIMEQFGVQVINHDYQEFVIPAGQSYVSPGQFLVEGDASSASYFLAAAAIKGGEVKVTGIGKNSIQGDIQFADALEKMGAQIEWGDDYVIARRGELNAVDLDFNHIPDAAMTIATTALFAKGTTAIRNVYNWRVKETDRLAAMATELRKVGATVEEGEDFIVITPPTKLIHAAIDTYDDHRMAMCFSLVALSDTPVTINDPKCTSKTFPDYFDKFAQLSR</sequence>
<dbReference type="EC" id="2.5.1.19" evidence="1"/>
<dbReference type="EMBL" id="CP001233">
    <property type="protein sequence ID" value="ACP05980.1"/>
    <property type="molecule type" value="Genomic_DNA"/>
</dbReference>
<dbReference type="RefSeq" id="WP_000445261.1">
    <property type="nucleotide sequence ID" value="NC_012578.1"/>
</dbReference>
<dbReference type="SMR" id="C3LN54"/>
<dbReference type="KEGG" id="vcm:VCM66_1672"/>
<dbReference type="HOGENOM" id="CLU_024321_0_0_6"/>
<dbReference type="UniPathway" id="UPA00053">
    <property type="reaction ID" value="UER00089"/>
</dbReference>
<dbReference type="Proteomes" id="UP000001217">
    <property type="component" value="Chromosome I"/>
</dbReference>
<dbReference type="GO" id="GO:0005737">
    <property type="term" value="C:cytoplasm"/>
    <property type="evidence" value="ECO:0007669"/>
    <property type="project" value="UniProtKB-SubCell"/>
</dbReference>
<dbReference type="GO" id="GO:0003866">
    <property type="term" value="F:3-phosphoshikimate 1-carboxyvinyltransferase activity"/>
    <property type="evidence" value="ECO:0007669"/>
    <property type="project" value="UniProtKB-UniRule"/>
</dbReference>
<dbReference type="GO" id="GO:0008652">
    <property type="term" value="P:amino acid biosynthetic process"/>
    <property type="evidence" value="ECO:0007669"/>
    <property type="project" value="UniProtKB-KW"/>
</dbReference>
<dbReference type="GO" id="GO:0009073">
    <property type="term" value="P:aromatic amino acid family biosynthetic process"/>
    <property type="evidence" value="ECO:0007669"/>
    <property type="project" value="UniProtKB-KW"/>
</dbReference>
<dbReference type="GO" id="GO:0009423">
    <property type="term" value="P:chorismate biosynthetic process"/>
    <property type="evidence" value="ECO:0007669"/>
    <property type="project" value="UniProtKB-UniRule"/>
</dbReference>
<dbReference type="CDD" id="cd01556">
    <property type="entry name" value="EPSP_synthase"/>
    <property type="match status" value="1"/>
</dbReference>
<dbReference type="FunFam" id="3.65.10.10:FF:000003">
    <property type="entry name" value="3-phosphoshikimate 1-carboxyvinyltransferase"/>
    <property type="match status" value="1"/>
</dbReference>
<dbReference type="FunFam" id="3.65.10.10:FF:000004">
    <property type="entry name" value="3-phosphoshikimate 1-carboxyvinyltransferase"/>
    <property type="match status" value="1"/>
</dbReference>
<dbReference type="Gene3D" id="3.65.10.10">
    <property type="entry name" value="Enolpyruvate transferase domain"/>
    <property type="match status" value="2"/>
</dbReference>
<dbReference type="HAMAP" id="MF_00210">
    <property type="entry name" value="EPSP_synth"/>
    <property type="match status" value="1"/>
</dbReference>
<dbReference type="InterPro" id="IPR001986">
    <property type="entry name" value="Enolpyruvate_Tfrase_dom"/>
</dbReference>
<dbReference type="InterPro" id="IPR036968">
    <property type="entry name" value="Enolpyruvate_Tfrase_sf"/>
</dbReference>
<dbReference type="InterPro" id="IPR006264">
    <property type="entry name" value="EPSP_synthase"/>
</dbReference>
<dbReference type="InterPro" id="IPR023193">
    <property type="entry name" value="EPSP_synthase_CS"/>
</dbReference>
<dbReference type="InterPro" id="IPR013792">
    <property type="entry name" value="RNA3'P_cycl/enolpyr_Trfase_a/b"/>
</dbReference>
<dbReference type="NCBIfam" id="TIGR01356">
    <property type="entry name" value="aroA"/>
    <property type="match status" value="1"/>
</dbReference>
<dbReference type="PANTHER" id="PTHR21090">
    <property type="entry name" value="AROM/DEHYDROQUINATE SYNTHASE"/>
    <property type="match status" value="1"/>
</dbReference>
<dbReference type="PANTHER" id="PTHR21090:SF5">
    <property type="entry name" value="PENTAFUNCTIONAL AROM POLYPEPTIDE"/>
    <property type="match status" value="1"/>
</dbReference>
<dbReference type="Pfam" id="PF00275">
    <property type="entry name" value="EPSP_synthase"/>
    <property type="match status" value="1"/>
</dbReference>
<dbReference type="PIRSF" id="PIRSF000505">
    <property type="entry name" value="EPSPS"/>
    <property type="match status" value="1"/>
</dbReference>
<dbReference type="SUPFAM" id="SSF55205">
    <property type="entry name" value="EPT/RTPC-like"/>
    <property type="match status" value="1"/>
</dbReference>
<dbReference type="PROSITE" id="PS00104">
    <property type="entry name" value="EPSP_SYNTHASE_1"/>
    <property type="match status" value="1"/>
</dbReference>
<dbReference type="PROSITE" id="PS00885">
    <property type="entry name" value="EPSP_SYNTHASE_2"/>
    <property type="match status" value="1"/>
</dbReference>
<comment type="function">
    <text evidence="1">Catalyzes the transfer of the enolpyruvyl moiety of phosphoenolpyruvate (PEP) to the 5-hydroxyl of shikimate-3-phosphate (S3P) to produce enolpyruvyl shikimate-3-phosphate and inorganic phosphate.</text>
</comment>
<comment type="catalytic activity">
    <reaction evidence="1">
        <text>3-phosphoshikimate + phosphoenolpyruvate = 5-O-(1-carboxyvinyl)-3-phosphoshikimate + phosphate</text>
        <dbReference type="Rhea" id="RHEA:21256"/>
        <dbReference type="ChEBI" id="CHEBI:43474"/>
        <dbReference type="ChEBI" id="CHEBI:57701"/>
        <dbReference type="ChEBI" id="CHEBI:58702"/>
        <dbReference type="ChEBI" id="CHEBI:145989"/>
        <dbReference type="EC" id="2.5.1.19"/>
    </reaction>
    <physiologicalReaction direction="left-to-right" evidence="1">
        <dbReference type="Rhea" id="RHEA:21257"/>
    </physiologicalReaction>
</comment>
<comment type="pathway">
    <text evidence="1">Metabolic intermediate biosynthesis; chorismate biosynthesis; chorismate from D-erythrose 4-phosphate and phosphoenolpyruvate: step 6/7.</text>
</comment>
<comment type="subunit">
    <text evidence="1">Monomer.</text>
</comment>
<comment type="subcellular location">
    <subcellularLocation>
        <location evidence="1">Cytoplasm</location>
    </subcellularLocation>
</comment>
<comment type="similarity">
    <text evidence="1">Belongs to the EPSP synthase family.</text>
</comment>
<proteinExistence type="inferred from homology"/>
<organism>
    <name type="scientific">Vibrio cholerae serotype O1 (strain M66-2)</name>
    <dbReference type="NCBI Taxonomy" id="579112"/>
    <lineage>
        <taxon>Bacteria</taxon>
        <taxon>Pseudomonadati</taxon>
        <taxon>Pseudomonadota</taxon>
        <taxon>Gammaproteobacteria</taxon>
        <taxon>Vibrionales</taxon>
        <taxon>Vibrionaceae</taxon>
        <taxon>Vibrio</taxon>
    </lineage>
</organism>
<reference key="1">
    <citation type="journal article" date="2008" name="PLoS ONE">
        <title>A recalibrated molecular clock and independent origins for the cholera pandemic clones.</title>
        <authorList>
            <person name="Feng L."/>
            <person name="Reeves P.R."/>
            <person name="Lan R."/>
            <person name="Ren Y."/>
            <person name="Gao C."/>
            <person name="Zhou Z."/>
            <person name="Ren Y."/>
            <person name="Cheng J."/>
            <person name="Wang W."/>
            <person name="Wang J."/>
            <person name="Qian W."/>
            <person name="Li D."/>
            <person name="Wang L."/>
        </authorList>
    </citation>
    <scope>NUCLEOTIDE SEQUENCE [LARGE SCALE GENOMIC DNA]</scope>
    <source>
        <strain>M66-2</strain>
    </source>
</reference>
<evidence type="ECO:0000255" key="1">
    <source>
        <dbReference type="HAMAP-Rule" id="MF_00210"/>
    </source>
</evidence>
<keyword id="KW-0028">Amino-acid biosynthesis</keyword>
<keyword id="KW-0057">Aromatic amino acid biosynthesis</keyword>
<keyword id="KW-0963">Cytoplasm</keyword>
<keyword id="KW-0808">Transferase</keyword>
<name>AROA_VIBCM</name>